<accession>Q65E52</accession>
<accession>Q62PM2</accession>
<sequence>MKSASKQKIIQPVDKNLDQVYQVSTMVSLLDGIYDGDFYMSEAKEHGDFGIGTFNRLDGELIGFDGEFYRLRSDGKAYPVQGSDCSPFCSLAFFRPDIYHEIKQRMPLEAFEEEMKRIMPSENLFYAIRMDGTFKKVKTRTVELQEKPYVPMVDAVKSQPIFDFNDITGTIVGFWTPQYANGIAVSGFHLHFIDEDRNVGGHVFDYEIEECTVQISQKLNMNLRLPNTQDFFQADFNKHDLAAGIEAAEGNPE</sequence>
<reference key="1">
    <citation type="journal article" date="2004" name="J. Mol. Microbiol. Biotechnol.">
        <title>The complete genome sequence of Bacillus licheniformis DSM13, an organism with great industrial potential.</title>
        <authorList>
            <person name="Veith B."/>
            <person name="Herzberg C."/>
            <person name="Steckel S."/>
            <person name="Feesche J."/>
            <person name="Maurer K.H."/>
            <person name="Ehrenreich P."/>
            <person name="Baeumer S."/>
            <person name="Henne A."/>
            <person name="Liesegang H."/>
            <person name="Merkl R."/>
            <person name="Ehrenreich A."/>
            <person name="Gottschalk G."/>
        </authorList>
    </citation>
    <scope>NUCLEOTIDE SEQUENCE [LARGE SCALE GENOMIC DNA]</scope>
    <source>
        <strain>ATCC 14580 / DSM 13 / JCM 2505 / CCUG 7422 / NBRC 12200 / NCIMB 9375 / NCTC 10341 / NRRL NRS-1264 / Gibson 46</strain>
    </source>
</reference>
<reference key="2">
    <citation type="journal article" date="2004" name="Genome Biol.">
        <title>Complete genome sequence of the industrial bacterium Bacillus licheniformis and comparisons with closely related Bacillus species.</title>
        <authorList>
            <person name="Rey M.W."/>
            <person name="Ramaiya P."/>
            <person name="Nelson B.A."/>
            <person name="Brody-Karpin S.D."/>
            <person name="Zaretsky E.J."/>
            <person name="Tang M."/>
            <person name="Lopez de Leon A."/>
            <person name="Xiang H."/>
            <person name="Gusti V."/>
            <person name="Clausen I.G."/>
            <person name="Olsen P.B."/>
            <person name="Rasmussen M.D."/>
            <person name="Andersen J.T."/>
            <person name="Joergensen P.L."/>
            <person name="Larsen T.S."/>
            <person name="Sorokin A."/>
            <person name="Bolotin A."/>
            <person name="Lapidus A."/>
            <person name="Galleron N."/>
            <person name="Ehrlich S.D."/>
            <person name="Berka R.M."/>
        </authorList>
    </citation>
    <scope>NUCLEOTIDE SEQUENCE [LARGE SCALE GENOMIC DNA]</scope>
    <source>
        <strain>ATCC 14580 / DSM 13 / JCM 2505 / CCUG 7422 / NBRC 12200 / NCIMB 9375 / NCTC 10341 / NRRL NRS-1264 / Gibson 46</strain>
    </source>
</reference>
<name>ALDC_BACLD</name>
<evidence type="ECO:0000250" key="1"/>
<evidence type="ECO:0000305" key="2"/>
<feature type="chain" id="PRO_0000403434" description="Alpha-acetolactate decarboxylase">
    <location>
        <begin position="1"/>
        <end position="253"/>
    </location>
</feature>
<organism>
    <name type="scientific">Bacillus licheniformis (strain ATCC 14580 / DSM 13 / JCM 2505 / CCUG 7422 / NBRC 12200 / NCIMB 9375 / NCTC 10341 / NRRL NRS-1264 / Gibson 46)</name>
    <dbReference type="NCBI Taxonomy" id="279010"/>
    <lineage>
        <taxon>Bacteria</taxon>
        <taxon>Bacillati</taxon>
        <taxon>Bacillota</taxon>
        <taxon>Bacilli</taxon>
        <taxon>Bacillales</taxon>
        <taxon>Bacillaceae</taxon>
        <taxon>Bacillus</taxon>
    </lineage>
</organism>
<protein>
    <recommendedName>
        <fullName>Alpha-acetolactate decarboxylase</fullName>
        <ecNumber>4.1.1.5</ecNumber>
    </recommendedName>
</protein>
<comment type="function">
    <text evidence="1">Converts acetolactate into acetoin.</text>
</comment>
<comment type="catalytic activity">
    <reaction>
        <text>(2S)-2-acetolactate + H(+) = (R)-acetoin + CO2</text>
        <dbReference type="Rhea" id="RHEA:21580"/>
        <dbReference type="ChEBI" id="CHEBI:15378"/>
        <dbReference type="ChEBI" id="CHEBI:15686"/>
        <dbReference type="ChEBI" id="CHEBI:16526"/>
        <dbReference type="ChEBI" id="CHEBI:58476"/>
        <dbReference type="EC" id="4.1.1.5"/>
    </reaction>
</comment>
<comment type="pathway">
    <text>Polyol metabolism; (R,R)-butane-2,3-diol biosynthesis; (R,R)-butane-2,3-diol from pyruvate: step 2/3.</text>
</comment>
<comment type="similarity">
    <text evidence="2">Belongs to the alpha-acetolactate decarboxylase family.</text>
</comment>
<dbReference type="EC" id="4.1.1.5"/>
<dbReference type="EMBL" id="CP000002">
    <property type="protein sequence ID" value="AAU25289.1"/>
    <property type="molecule type" value="Genomic_DNA"/>
</dbReference>
<dbReference type="EMBL" id="AE017333">
    <property type="protein sequence ID" value="AAU42662.1"/>
    <property type="molecule type" value="Genomic_DNA"/>
</dbReference>
<dbReference type="SMR" id="Q65E52"/>
<dbReference type="STRING" id="279010.BL02479"/>
<dbReference type="KEGG" id="bld:BLi03847"/>
<dbReference type="KEGG" id="bli:BL02479"/>
<dbReference type="eggNOG" id="COG3527">
    <property type="taxonomic scope" value="Bacteria"/>
</dbReference>
<dbReference type="HOGENOM" id="CLU_072561_0_0_9"/>
<dbReference type="UniPathway" id="UPA00626">
    <property type="reaction ID" value="UER00678"/>
</dbReference>
<dbReference type="Proteomes" id="UP000000606">
    <property type="component" value="Chromosome"/>
</dbReference>
<dbReference type="GO" id="GO:0047605">
    <property type="term" value="F:acetolactate decarboxylase activity"/>
    <property type="evidence" value="ECO:0007669"/>
    <property type="project" value="UniProtKB-EC"/>
</dbReference>
<dbReference type="GO" id="GO:0045151">
    <property type="term" value="P:acetoin biosynthetic process"/>
    <property type="evidence" value="ECO:0007669"/>
    <property type="project" value="UniProtKB-KW"/>
</dbReference>
<dbReference type="CDD" id="cd17299">
    <property type="entry name" value="acetolactate_decarboxylase"/>
    <property type="match status" value="1"/>
</dbReference>
<dbReference type="Gene3D" id="3.30.1330.80">
    <property type="entry name" value="Hypothetical protein, similar to alpha- acetolactate decarboxylase, domain 2"/>
    <property type="match status" value="2"/>
</dbReference>
<dbReference type="InterPro" id="IPR005128">
    <property type="entry name" value="Acetolactate_a_deCO2ase"/>
</dbReference>
<dbReference type="NCBIfam" id="TIGR01252">
    <property type="entry name" value="acetolac_decarb"/>
    <property type="match status" value="1"/>
</dbReference>
<dbReference type="PANTHER" id="PTHR35524">
    <property type="entry name" value="ALPHA-ACETOLACTATE DECARBOXYLASE"/>
    <property type="match status" value="1"/>
</dbReference>
<dbReference type="PANTHER" id="PTHR35524:SF1">
    <property type="entry name" value="ALPHA-ACETOLACTATE DECARBOXYLASE"/>
    <property type="match status" value="1"/>
</dbReference>
<dbReference type="Pfam" id="PF03306">
    <property type="entry name" value="AAL_decarboxy"/>
    <property type="match status" value="1"/>
</dbReference>
<dbReference type="PIRSF" id="PIRSF001332">
    <property type="entry name" value="Acetolac_decarb"/>
    <property type="match status" value="1"/>
</dbReference>
<dbReference type="SUPFAM" id="SSF117856">
    <property type="entry name" value="AF0104/ALDC/Ptd012-like"/>
    <property type="match status" value="1"/>
</dbReference>
<gene>
    <name type="primary">alsD</name>
    <name type="ordered locus">BL02479</name>
    <name type="ordered locus">BLi03847</name>
</gene>
<keyword id="KW-0005">Acetoin biosynthesis</keyword>
<keyword id="KW-0210">Decarboxylase</keyword>
<keyword id="KW-0456">Lyase</keyword>
<keyword id="KW-1185">Reference proteome</keyword>
<proteinExistence type="inferred from homology"/>